<protein>
    <recommendedName>
        <fullName>RalA-binding protein 1</fullName>
        <shortName>RalBP1</shortName>
    </recommendedName>
    <alternativeName>
        <fullName>Ral-interacting protein 1</fullName>
    </alternativeName>
</protein>
<proteinExistence type="evidence at protein level"/>
<keyword id="KW-0217">Developmental protein</keyword>
<keyword id="KW-0343">GTPase activation</keyword>
<keyword id="KW-0597">Phosphoprotein</keyword>
<keyword id="KW-1185">Reference proteome</keyword>
<keyword id="KW-0677">Repeat</keyword>
<keyword id="KW-0691">RNA editing</keyword>
<comment type="function">
    <text evidence="5">Participates in receptor endocytosis during interphase, is also involved in mitotic processes when endocytosis is switched off.</text>
</comment>
<comment type="subunit">
    <text evidence="5">Interacts with CycB and numb.</text>
</comment>
<comment type="RNA editing">
    <location>
        <position position="229" evidence="4 6"/>
    </location>
    <location>
        <position position="230" evidence="4 6"/>
    </location>
    <location>
        <position position="233" evidence="4 6"/>
    </location>
    <location>
        <position position="254" evidence="4 6"/>
    </location>
    <location>
        <position position="265" evidence="4 6"/>
    </location>
    <text evidence="6">Partially edited. Target of Adar.</text>
</comment>
<comment type="sequence caution" evidence="8">
    <conflict type="miscellaneous discrepancy">
        <sequence resource="EMBL-CDS" id="AAM29343"/>
    </conflict>
    <text>Intron retention.</text>
</comment>
<feature type="chain" id="PRO_0000278144" description="RalA-binding protein 1">
    <location>
        <begin position="1"/>
        <end position="625"/>
    </location>
</feature>
<feature type="domain" description="Rho-GAP" evidence="1">
    <location>
        <begin position="191"/>
        <end position="385"/>
    </location>
</feature>
<feature type="region of interest" description="Disordered" evidence="2">
    <location>
        <begin position="1"/>
        <end position="172"/>
    </location>
</feature>
<feature type="region of interest" description="Disordered" evidence="2">
    <location>
        <begin position="443"/>
        <end position="500"/>
    </location>
</feature>
<feature type="compositionally biased region" description="Basic and acidic residues" evidence="2">
    <location>
        <begin position="1"/>
        <end position="11"/>
    </location>
</feature>
<feature type="compositionally biased region" description="Basic and acidic residues" evidence="2">
    <location>
        <begin position="20"/>
        <end position="60"/>
    </location>
</feature>
<feature type="compositionally biased region" description="Basic and acidic residues" evidence="2">
    <location>
        <begin position="94"/>
        <end position="157"/>
    </location>
</feature>
<feature type="compositionally biased region" description="Polar residues" evidence="2">
    <location>
        <begin position="475"/>
        <end position="484"/>
    </location>
</feature>
<feature type="site" description="Arginine finger; crucial for GTP hydrolysis by stabilizing the transition state" evidence="1">
    <location>
        <position position="228"/>
    </location>
</feature>
<feature type="modified residue" description="Phosphoserine" evidence="7">
    <location>
        <position position="68"/>
    </location>
</feature>
<feature type="modified residue" description="Phosphoserine" evidence="7">
    <location>
        <position position="69"/>
    </location>
</feature>
<feature type="sequence variant" description="In RNA edited version." evidence="6">
    <original>I</original>
    <variation>V</variation>
    <location>
        <position position="229"/>
    </location>
</feature>
<feature type="sequence variant" description="In RNA edited version." evidence="6">
    <original>E</original>
    <variation>G</variation>
    <location>
        <position position="230"/>
    </location>
</feature>
<feature type="sequence variant" description="In RNA edited version." evidence="6">
    <original>K</original>
    <variation>E</variation>
    <location>
        <position position="233"/>
    </location>
</feature>
<feature type="sequence variant" description="In RNA edited version." evidence="6">
    <original>E</original>
    <variation>G</variation>
    <location>
        <position position="254"/>
    </location>
</feature>
<feature type="sequence variant" description="In RNA edited version." evidence="6">
    <original>K</original>
    <variation>R</variation>
    <location>
        <position position="265"/>
    </location>
</feature>
<feature type="sequence conflict" description="In Ref. 1; AAD02099." evidence="8" ref="1">
    <original>V</original>
    <variation>F</variation>
    <location>
        <position position="123"/>
    </location>
</feature>
<feature type="sequence conflict" description="In Ref. 4; AAM29343." evidence="8" ref="4">
    <original>H</original>
    <variation>R</variation>
    <location>
        <position position="220"/>
    </location>
</feature>
<feature type="sequence conflict" description="In Ref. 4; AAM29343." evidence="8" ref="4">
    <original>Q</original>
    <variation>R</variation>
    <location>
        <position position="225"/>
    </location>
</feature>
<feature type="sequence conflict" description="In Ref. 1; AAD02099." evidence="8" ref="1">
    <original>T</original>
    <variation>A</variation>
    <location>
        <position position="380"/>
    </location>
</feature>
<feature type="sequence conflict" description="In Ref. 1; AAD02099." evidence="8" ref="1">
    <original>Q</original>
    <variation>H</variation>
    <location>
        <position position="555"/>
    </location>
</feature>
<dbReference type="EMBL" id="AF037470">
    <property type="protein sequence ID" value="AAD02099.1"/>
    <property type="molecule type" value="mRNA"/>
</dbReference>
<dbReference type="EMBL" id="AE014297">
    <property type="protein sequence ID" value="AAF55832.1"/>
    <property type="molecule type" value="Genomic_DNA"/>
</dbReference>
<dbReference type="EMBL" id="AY113338">
    <property type="protein sequence ID" value="AAM29343.1"/>
    <property type="status" value="ALT_SEQ"/>
    <property type="molecule type" value="mRNA"/>
</dbReference>
<dbReference type="RefSeq" id="NP_650933.2">
    <property type="nucleotide sequence ID" value="NM_142676.4"/>
</dbReference>
<dbReference type="SMR" id="Q9VDG2"/>
<dbReference type="BioGRID" id="67455">
    <property type="interactions" value="27"/>
</dbReference>
<dbReference type="FunCoup" id="Q9VDG2">
    <property type="interactions" value="79"/>
</dbReference>
<dbReference type="IntAct" id="Q9VDG2">
    <property type="interactions" value="12"/>
</dbReference>
<dbReference type="STRING" id="7227.FBpp0083406"/>
<dbReference type="GlyGen" id="Q9VDG2">
    <property type="glycosylation" value="1 site"/>
</dbReference>
<dbReference type="iPTMnet" id="Q9VDG2"/>
<dbReference type="PaxDb" id="7227-FBpp0083406"/>
<dbReference type="EnsemblMetazoa" id="FBtr0084002">
    <property type="protein sequence ID" value="FBpp0083406"/>
    <property type="gene ID" value="FBgn0026056"/>
</dbReference>
<dbReference type="GeneID" id="42484"/>
<dbReference type="KEGG" id="dme:Dmel_CG11622"/>
<dbReference type="UCSC" id="CG11622-RA">
    <property type="organism name" value="d. melanogaster"/>
</dbReference>
<dbReference type="AGR" id="FB:FBgn0026056"/>
<dbReference type="CTD" id="42484"/>
<dbReference type="FlyBase" id="FBgn0026056">
    <property type="gene designation" value="Rlip"/>
</dbReference>
<dbReference type="VEuPathDB" id="VectorBase:FBgn0026056"/>
<dbReference type="eggNOG" id="KOG4370">
    <property type="taxonomic scope" value="Eukaryota"/>
</dbReference>
<dbReference type="GeneTree" id="ENSGT00940000154639"/>
<dbReference type="HOGENOM" id="CLU_028068_0_1_1"/>
<dbReference type="InParanoid" id="Q9VDG2"/>
<dbReference type="OMA" id="LMHYKRL"/>
<dbReference type="OrthoDB" id="10033734at2759"/>
<dbReference type="PhylomeDB" id="Q9VDG2"/>
<dbReference type="Reactome" id="R-DME-9013148">
    <property type="pathway name" value="CDC42 GTPase cycle"/>
</dbReference>
<dbReference type="Reactome" id="R-DME-9013149">
    <property type="pathway name" value="RAC1 GTPase cycle"/>
</dbReference>
<dbReference type="SignaLink" id="Q9VDG2"/>
<dbReference type="BioGRID-ORCS" id="42484">
    <property type="hits" value="0 hits in 1 CRISPR screen"/>
</dbReference>
<dbReference type="GenomeRNAi" id="42484"/>
<dbReference type="PRO" id="PR:Q9VDG2"/>
<dbReference type="Proteomes" id="UP000000803">
    <property type="component" value="Chromosome 3R"/>
</dbReference>
<dbReference type="Bgee" id="FBgn0026056">
    <property type="expression patterns" value="Expressed in adult dorsomedial neurosecretory cell (Drosophila) in brain and 213 other cell types or tissues"/>
</dbReference>
<dbReference type="ExpressionAtlas" id="Q9VDG2">
    <property type="expression patterns" value="baseline and differential"/>
</dbReference>
<dbReference type="GO" id="GO:0016020">
    <property type="term" value="C:membrane"/>
    <property type="evidence" value="ECO:0000250"/>
    <property type="project" value="FlyBase"/>
</dbReference>
<dbReference type="GO" id="GO:0005096">
    <property type="term" value="F:GTPase activator activity"/>
    <property type="evidence" value="ECO:0000250"/>
    <property type="project" value="FlyBase"/>
</dbReference>
<dbReference type="GO" id="GO:0031267">
    <property type="term" value="F:small GTPase binding"/>
    <property type="evidence" value="ECO:0000353"/>
    <property type="project" value="FlyBase"/>
</dbReference>
<dbReference type="GO" id="GO:0006898">
    <property type="term" value="P:receptor-mediated endocytosis"/>
    <property type="evidence" value="ECO:0000315"/>
    <property type="project" value="UniProtKB"/>
</dbReference>
<dbReference type="GO" id="GO:0046578">
    <property type="term" value="P:regulation of Ras protein signal transduction"/>
    <property type="evidence" value="ECO:0000305"/>
    <property type="project" value="FlyBase"/>
</dbReference>
<dbReference type="GO" id="GO:0007264">
    <property type="term" value="P:small GTPase-mediated signal transduction"/>
    <property type="evidence" value="ECO:0000318"/>
    <property type="project" value="GO_Central"/>
</dbReference>
<dbReference type="CDD" id="cd04381">
    <property type="entry name" value="RhoGap_RalBP1"/>
    <property type="match status" value="1"/>
</dbReference>
<dbReference type="FunFam" id="1.20.58.90:FF:000001">
    <property type="entry name" value="ralA-binding protein 1"/>
    <property type="match status" value="1"/>
</dbReference>
<dbReference type="Gene3D" id="1.20.58.90">
    <property type="match status" value="1"/>
</dbReference>
<dbReference type="Gene3D" id="1.10.555.10">
    <property type="entry name" value="Rho GTPase activation protein"/>
    <property type="match status" value="1"/>
</dbReference>
<dbReference type="InterPro" id="IPR039767">
    <property type="entry name" value="RALBP1"/>
</dbReference>
<dbReference type="InterPro" id="IPR049041">
    <property type="entry name" value="RalBP1-like_Ral-bd"/>
</dbReference>
<dbReference type="InterPro" id="IPR008936">
    <property type="entry name" value="Rho_GTPase_activation_prot"/>
</dbReference>
<dbReference type="InterPro" id="IPR000198">
    <property type="entry name" value="RhoGAP_dom"/>
</dbReference>
<dbReference type="PANTHER" id="PTHR12783">
    <property type="entry name" value="RALA BINDING PROTEIN 1 RALBP1"/>
    <property type="match status" value="1"/>
</dbReference>
<dbReference type="PANTHER" id="PTHR12783:SF5">
    <property type="entry name" value="RALA-BINDING PROTEIN 1"/>
    <property type="match status" value="1"/>
</dbReference>
<dbReference type="Pfam" id="PF00620">
    <property type="entry name" value="RhoGAP"/>
    <property type="match status" value="1"/>
</dbReference>
<dbReference type="Pfam" id="PF20924">
    <property type="entry name" value="RLIP76_Ral-bd"/>
    <property type="match status" value="1"/>
</dbReference>
<dbReference type="SMART" id="SM00324">
    <property type="entry name" value="RhoGAP"/>
    <property type="match status" value="1"/>
</dbReference>
<dbReference type="SUPFAM" id="SSF48350">
    <property type="entry name" value="GTPase activation domain, GAP"/>
    <property type="match status" value="1"/>
</dbReference>
<dbReference type="PROSITE" id="PS50238">
    <property type="entry name" value="RHOGAP"/>
    <property type="match status" value="1"/>
</dbReference>
<evidence type="ECO:0000255" key="1">
    <source>
        <dbReference type="PROSITE-ProRule" id="PRU00172"/>
    </source>
</evidence>
<evidence type="ECO:0000256" key="2">
    <source>
        <dbReference type="SAM" id="MobiDB-lite"/>
    </source>
</evidence>
<evidence type="ECO:0000269" key="3">
    <source>
    </source>
</evidence>
<evidence type="ECO:0000269" key="4">
    <source>
    </source>
</evidence>
<evidence type="ECO:0000269" key="5">
    <source>
    </source>
</evidence>
<evidence type="ECO:0000269" key="6">
    <source>
    </source>
</evidence>
<evidence type="ECO:0000269" key="7">
    <source>
    </source>
</evidence>
<evidence type="ECO:0000305" key="8"/>
<evidence type="ECO:0000312" key="9">
    <source>
        <dbReference type="EMBL" id="AAD02099.1"/>
    </source>
</evidence>
<evidence type="ECO:0000312" key="10">
    <source>
        <dbReference type="EMBL" id="AAF55832.1"/>
    </source>
</evidence>
<evidence type="ECO:0000312" key="11">
    <source>
        <dbReference type="EMBL" id="AAM29343.1"/>
    </source>
</evidence>
<name>RLIP_DROME</name>
<accession>Q9VDG2</accession>
<accession>O96392</accession>
<accession>Q8MZ58</accession>
<organism>
    <name type="scientific">Drosophila melanogaster</name>
    <name type="common">Fruit fly</name>
    <dbReference type="NCBI Taxonomy" id="7227"/>
    <lineage>
        <taxon>Eukaryota</taxon>
        <taxon>Metazoa</taxon>
        <taxon>Ecdysozoa</taxon>
        <taxon>Arthropoda</taxon>
        <taxon>Hexapoda</taxon>
        <taxon>Insecta</taxon>
        <taxon>Pterygota</taxon>
        <taxon>Neoptera</taxon>
        <taxon>Endopterygota</taxon>
        <taxon>Diptera</taxon>
        <taxon>Brachycera</taxon>
        <taxon>Muscomorpha</taxon>
        <taxon>Ephydroidea</taxon>
        <taxon>Drosophilidae</taxon>
        <taxon>Drosophila</taxon>
        <taxon>Sophophora</taxon>
    </lineage>
</organism>
<reference evidence="9" key="1">
    <citation type="submission" date="1997-12" db="EMBL/GenBank/DDBJ databases">
        <authorList>
            <person name="Mirey G.N."/>
            <person name="Camonis J.H."/>
        </authorList>
    </citation>
    <scope>NUCLEOTIDE SEQUENCE [MRNA]</scope>
</reference>
<reference evidence="10" key="2">
    <citation type="journal article" date="2000" name="Science">
        <title>The genome sequence of Drosophila melanogaster.</title>
        <authorList>
            <person name="Adams M.D."/>
            <person name="Celniker S.E."/>
            <person name="Holt R.A."/>
            <person name="Evans C.A."/>
            <person name="Gocayne J.D."/>
            <person name="Amanatides P.G."/>
            <person name="Scherer S.E."/>
            <person name="Li P.W."/>
            <person name="Hoskins R.A."/>
            <person name="Galle R.F."/>
            <person name="George R.A."/>
            <person name="Lewis S.E."/>
            <person name="Richards S."/>
            <person name="Ashburner M."/>
            <person name="Henderson S.N."/>
            <person name="Sutton G.G."/>
            <person name="Wortman J.R."/>
            <person name="Yandell M.D."/>
            <person name="Zhang Q."/>
            <person name="Chen L.X."/>
            <person name="Brandon R.C."/>
            <person name="Rogers Y.-H.C."/>
            <person name="Blazej R.G."/>
            <person name="Champe M."/>
            <person name="Pfeiffer B.D."/>
            <person name="Wan K.H."/>
            <person name="Doyle C."/>
            <person name="Baxter E.G."/>
            <person name="Helt G."/>
            <person name="Nelson C.R."/>
            <person name="Miklos G.L.G."/>
            <person name="Abril J.F."/>
            <person name="Agbayani A."/>
            <person name="An H.-J."/>
            <person name="Andrews-Pfannkoch C."/>
            <person name="Baldwin D."/>
            <person name="Ballew R.M."/>
            <person name="Basu A."/>
            <person name="Baxendale J."/>
            <person name="Bayraktaroglu L."/>
            <person name="Beasley E.M."/>
            <person name="Beeson K.Y."/>
            <person name="Benos P.V."/>
            <person name="Berman B.P."/>
            <person name="Bhandari D."/>
            <person name="Bolshakov S."/>
            <person name="Borkova D."/>
            <person name="Botchan M.R."/>
            <person name="Bouck J."/>
            <person name="Brokstein P."/>
            <person name="Brottier P."/>
            <person name="Burtis K.C."/>
            <person name="Busam D.A."/>
            <person name="Butler H."/>
            <person name="Cadieu E."/>
            <person name="Center A."/>
            <person name="Chandra I."/>
            <person name="Cherry J.M."/>
            <person name="Cawley S."/>
            <person name="Dahlke C."/>
            <person name="Davenport L.B."/>
            <person name="Davies P."/>
            <person name="de Pablos B."/>
            <person name="Delcher A."/>
            <person name="Deng Z."/>
            <person name="Mays A.D."/>
            <person name="Dew I."/>
            <person name="Dietz S.M."/>
            <person name="Dodson K."/>
            <person name="Doup L.E."/>
            <person name="Downes M."/>
            <person name="Dugan-Rocha S."/>
            <person name="Dunkov B.C."/>
            <person name="Dunn P."/>
            <person name="Durbin K.J."/>
            <person name="Evangelista C.C."/>
            <person name="Ferraz C."/>
            <person name="Ferriera S."/>
            <person name="Fleischmann W."/>
            <person name="Fosler C."/>
            <person name="Gabrielian A.E."/>
            <person name="Garg N.S."/>
            <person name="Gelbart W.M."/>
            <person name="Glasser K."/>
            <person name="Glodek A."/>
            <person name="Gong F."/>
            <person name="Gorrell J.H."/>
            <person name="Gu Z."/>
            <person name="Guan P."/>
            <person name="Harris M."/>
            <person name="Harris N.L."/>
            <person name="Harvey D.A."/>
            <person name="Heiman T.J."/>
            <person name="Hernandez J.R."/>
            <person name="Houck J."/>
            <person name="Hostin D."/>
            <person name="Houston K.A."/>
            <person name="Howland T.J."/>
            <person name="Wei M.-H."/>
            <person name="Ibegwam C."/>
            <person name="Jalali M."/>
            <person name="Kalush F."/>
            <person name="Karpen G.H."/>
            <person name="Ke Z."/>
            <person name="Kennison J.A."/>
            <person name="Ketchum K.A."/>
            <person name="Kimmel B.E."/>
            <person name="Kodira C.D."/>
            <person name="Kraft C.L."/>
            <person name="Kravitz S."/>
            <person name="Kulp D."/>
            <person name="Lai Z."/>
            <person name="Lasko P."/>
            <person name="Lei Y."/>
            <person name="Levitsky A.A."/>
            <person name="Li J.H."/>
            <person name="Li Z."/>
            <person name="Liang Y."/>
            <person name="Lin X."/>
            <person name="Liu X."/>
            <person name="Mattei B."/>
            <person name="McIntosh T.C."/>
            <person name="McLeod M.P."/>
            <person name="McPherson D."/>
            <person name="Merkulov G."/>
            <person name="Milshina N.V."/>
            <person name="Mobarry C."/>
            <person name="Morris J."/>
            <person name="Moshrefi A."/>
            <person name="Mount S.M."/>
            <person name="Moy M."/>
            <person name="Murphy B."/>
            <person name="Murphy L."/>
            <person name="Muzny D.M."/>
            <person name="Nelson D.L."/>
            <person name="Nelson D.R."/>
            <person name="Nelson K.A."/>
            <person name="Nixon K."/>
            <person name="Nusskern D.R."/>
            <person name="Pacleb J.M."/>
            <person name="Palazzolo M."/>
            <person name="Pittman G.S."/>
            <person name="Pan S."/>
            <person name="Pollard J."/>
            <person name="Puri V."/>
            <person name="Reese M.G."/>
            <person name="Reinert K."/>
            <person name="Remington K."/>
            <person name="Saunders R.D.C."/>
            <person name="Scheeler F."/>
            <person name="Shen H."/>
            <person name="Shue B.C."/>
            <person name="Siden-Kiamos I."/>
            <person name="Simpson M."/>
            <person name="Skupski M.P."/>
            <person name="Smith T.J."/>
            <person name="Spier E."/>
            <person name="Spradling A.C."/>
            <person name="Stapleton M."/>
            <person name="Strong R."/>
            <person name="Sun E."/>
            <person name="Svirskas R."/>
            <person name="Tector C."/>
            <person name="Turner R."/>
            <person name="Venter E."/>
            <person name="Wang A.H."/>
            <person name="Wang X."/>
            <person name="Wang Z.-Y."/>
            <person name="Wassarman D.A."/>
            <person name="Weinstock G.M."/>
            <person name="Weissenbach J."/>
            <person name="Williams S.M."/>
            <person name="Woodage T."/>
            <person name="Worley K.C."/>
            <person name="Wu D."/>
            <person name="Yang S."/>
            <person name="Yao Q.A."/>
            <person name="Ye J."/>
            <person name="Yeh R.-F."/>
            <person name="Zaveri J.S."/>
            <person name="Zhan M."/>
            <person name="Zhang G."/>
            <person name="Zhao Q."/>
            <person name="Zheng L."/>
            <person name="Zheng X.H."/>
            <person name="Zhong F.N."/>
            <person name="Zhong W."/>
            <person name="Zhou X."/>
            <person name="Zhu S.C."/>
            <person name="Zhu X."/>
            <person name="Smith H.O."/>
            <person name="Gibbs R.A."/>
            <person name="Myers E.W."/>
            <person name="Rubin G.M."/>
            <person name="Venter J.C."/>
        </authorList>
    </citation>
    <scope>NUCLEOTIDE SEQUENCE [LARGE SCALE GENOMIC DNA]</scope>
    <source>
        <strain evidence="3">Berkeley</strain>
    </source>
</reference>
<reference evidence="8 10" key="3">
    <citation type="journal article" date="2002" name="Genome Biol.">
        <title>Annotation of the Drosophila melanogaster euchromatic genome: a systematic review.</title>
        <authorList>
            <person name="Misra S."/>
            <person name="Crosby M.A."/>
            <person name="Mungall C.J."/>
            <person name="Matthews B.B."/>
            <person name="Campbell K.S."/>
            <person name="Hradecky P."/>
            <person name="Huang Y."/>
            <person name="Kaminker J.S."/>
            <person name="Millburn G.H."/>
            <person name="Prochnik S.E."/>
            <person name="Smith C.D."/>
            <person name="Tupy J.L."/>
            <person name="Whitfield E.J."/>
            <person name="Bayraktaroglu L."/>
            <person name="Berman B.P."/>
            <person name="Bettencourt B.R."/>
            <person name="Celniker S.E."/>
            <person name="de Grey A.D.N.J."/>
            <person name="Drysdale R.A."/>
            <person name="Harris N.L."/>
            <person name="Richter J."/>
            <person name="Russo S."/>
            <person name="Schroeder A.J."/>
            <person name="Shu S.Q."/>
            <person name="Stapleton M."/>
            <person name="Yamada C."/>
            <person name="Ashburner M."/>
            <person name="Gelbart W.M."/>
            <person name="Rubin G.M."/>
            <person name="Lewis S.E."/>
        </authorList>
    </citation>
    <scope>GENOME REANNOTATION</scope>
    <source>
        <strain>Berkeley</strain>
    </source>
</reference>
<reference evidence="8 11" key="4">
    <citation type="journal article" date="2002" name="Genome Biol.">
        <title>A Drosophila full-length cDNA resource.</title>
        <authorList>
            <person name="Stapleton M."/>
            <person name="Carlson J.W."/>
            <person name="Brokstein P."/>
            <person name="Yu C."/>
            <person name="Champe M."/>
            <person name="George R.A."/>
            <person name="Guarin H."/>
            <person name="Kronmiller B."/>
            <person name="Pacleb J.M."/>
            <person name="Park S."/>
            <person name="Wan K.H."/>
            <person name="Rubin G.M."/>
            <person name="Celniker S.E."/>
        </authorList>
    </citation>
    <scope>NUCLEOTIDE SEQUENCE [LARGE SCALE MRNA]</scope>
    <scope>RNA EDITING OF POSITIONS 229; 230; 233; 254 AND 265</scope>
    <source>
        <strain evidence="11">Berkeley</strain>
        <tissue evidence="4">Head</tissue>
    </source>
</reference>
<reference evidence="8" key="5">
    <citation type="journal article" date="2003" name="J. Biol. Chem.">
        <title>RLIP, an effector of the Ral GTPases, is a platform for Cdk1 to phosphorylate epsin during the switch off of endocytosis in mitosis.</title>
        <authorList>
            <person name="Rosse C."/>
            <person name="L'Hoste S."/>
            <person name="Offner N."/>
            <person name="Picard A."/>
            <person name="Camonis J."/>
        </authorList>
    </citation>
    <scope>FUNCTION</scope>
    <scope>INTERACTION WITH CYCB AND NUMB</scope>
</reference>
<reference evidence="8" key="6">
    <citation type="journal article" date="2006" name="RNA">
        <title>RNA editing in Drosophila melanogaster: new targets and functional consequences.</title>
        <authorList>
            <person name="Stapleton M."/>
            <person name="Carlson J.W."/>
            <person name="Celniker S.E."/>
        </authorList>
    </citation>
    <scope>RNA EDITING OF POSITIONS 229; 230; 233; 254 AND 265</scope>
</reference>
<reference key="7">
    <citation type="journal article" date="2008" name="J. Proteome Res.">
        <title>Phosphoproteome analysis of Drosophila melanogaster embryos.</title>
        <authorList>
            <person name="Zhai B."/>
            <person name="Villen J."/>
            <person name="Beausoleil S.A."/>
            <person name="Mintseris J."/>
            <person name="Gygi S.P."/>
        </authorList>
    </citation>
    <scope>PHOSPHORYLATION [LARGE SCALE ANALYSIS] AT SER-68 AND SER-69</scope>
    <scope>IDENTIFICATION BY MASS SPECTROMETRY</scope>
    <source>
        <tissue>Embryo</tissue>
    </source>
</reference>
<gene>
    <name evidence="10" type="primary">Rlip</name>
    <name type="ORF">CG11622</name>
</gene>
<sequence>MDFDSPEEKEFPGLYASEAADAKSRKSKEESDFSEDHDHSKKDLLIGRRKDKKEKGKDRGYAALEGESSPEEELDTKSPSKSKKSKTFKFTSSKSKEKREKSRDKSEKDSKHAEEEPSVSHKVKEKERDKEKDRDEPKKKDKEEKRKEKDKKADKKDKKDKKSKQLSQQQDDVSAAEEVLALGYPVFGVSVSLATERSRCHDGVDIPLVVRDCIDFLQDHLKCEQIYKIEPIKTRLMHFKRLYNNREHDSAVDELNLPTACSLLKLFLRELPEPLLTTDLVARFEEVASHPKVTTQQAELQQLLEQLPKCNRTLLAWVLLHFDAVIQQERHNKLNAQSLAMLLSPTLQMSHRLMVALLCHCNNLFADVQLIKYVPPLTSTSPKLPDTPEDIQTELRKQDSLLSQIHSEMNAGFITKKREEQLWEVQRIITQLKRKLRTFEKKQEKTAEEVDNSSSAPPAVASEDTTDSKPAGTPAVSTNNSISQEEPKTDTLTPKDAPNDFTIDPSTGFILLPKSNPHRENLLRLQIEYDELMEWQNELKARIVAERNEVYRLKQLYEQQSINSQMASLASGSQAPPESDYERIIEHYTRENALLEHKKNMLGMELKEERRACIALQVELRLQQF</sequence>